<feature type="chain" id="PRO_0000231933" description="RNA pyrophosphohydrolase">
    <location>
        <begin position="1"/>
        <end position="161"/>
    </location>
</feature>
<feature type="domain" description="Nudix hydrolase" evidence="1">
    <location>
        <begin position="12"/>
        <end position="154"/>
    </location>
</feature>
<feature type="short sequence motif" description="Nudix box">
    <location>
        <begin position="46"/>
        <end position="67"/>
    </location>
</feature>
<accession>Q68XD3</accession>
<proteinExistence type="inferred from homology"/>
<gene>
    <name evidence="1" type="primary">rppH</name>
    <name evidence="1" type="synonym">nudH</name>
    <name type="ordered locus">RT0228</name>
</gene>
<name>RPPH_RICTY</name>
<dbReference type="EC" id="3.6.1.-" evidence="1"/>
<dbReference type="EMBL" id="AE017197">
    <property type="protein sequence ID" value="AAU03709.1"/>
    <property type="molecule type" value="Genomic_DNA"/>
</dbReference>
<dbReference type="RefSeq" id="WP_011190695.1">
    <property type="nucleotide sequence ID" value="NC_006142.1"/>
</dbReference>
<dbReference type="SMR" id="Q68XD3"/>
<dbReference type="KEGG" id="rty:RT0228"/>
<dbReference type="eggNOG" id="COG0494">
    <property type="taxonomic scope" value="Bacteria"/>
</dbReference>
<dbReference type="HOGENOM" id="CLU_087195_3_0_5"/>
<dbReference type="OrthoDB" id="9816040at2"/>
<dbReference type="Proteomes" id="UP000000604">
    <property type="component" value="Chromosome"/>
</dbReference>
<dbReference type="GO" id="GO:0005737">
    <property type="term" value="C:cytoplasm"/>
    <property type="evidence" value="ECO:0007669"/>
    <property type="project" value="TreeGrafter"/>
</dbReference>
<dbReference type="GO" id="GO:0034353">
    <property type="term" value="F:mRNA 5'-diphosphatase activity"/>
    <property type="evidence" value="ECO:0007669"/>
    <property type="project" value="TreeGrafter"/>
</dbReference>
<dbReference type="GO" id="GO:0006402">
    <property type="term" value="P:mRNA catabolic process"/>
    <property type="evidence" value="ECO:0007669"/>
    <property type="project" value="TreeGrafter"/>
</dbReference>
<dbReference type="CDD" id="cd03671">
    <property type="entry name" value="NUDIX_Ap4A_hydrolase_plant_like"/>
    <property type="match status" value="1"/>
</dbReference>
<dbReference type="Gene3D" id="3.90.79.10">
    <property type="entry name" value="Nucleoside Triphosphate Pyrophosphohydrolase"/>
    <property type="match status" value="1"/>
</dbReference>
<dbReference type="HAMAP" id="MF_00298">
    <property type="entry name" value="Nudix_RppH"/>
    <property type="match status" value="1"/>
</dbReference>
<dbReference type="InterPro" id="IPR015797">
    <property type="entry name" value="NUDIX_hydrolase-like_dom_sf"/>
</dbReference>
<dbReference type="InterPro" id="IPR020084">
    <property type="entry name" value="NUDIX_hydrolase_CS"/>
</dbReference>
<dbReference type="InterPro" id="IPR000086">
    <property type="entry name" value="NUDIX_hydrolase_dom"/>
</dbReference>
<dbReference type="InterPro" id="IPR022927">
    <property type="entry name" value="RppH"/>
</dbReference>
<dbReference type="NCBIfam" id="NF001936">
    <property type="entry name" value="PRK00714.1-3"/>
    <property type="match status" value="1"/>
</dbReference>
<dbReference type="NCBIfam" id="NF001938">
    <property type="entry name" value="PRK00714.1-5"/>
    <property type="match status" value="1"/>
</dbReference>
<dbReference type="PANTHER" id="PTHR23114">
    <property type="entry name" value="M7GPPPN-MRNA HYDROLASE"/>
    <property type="match status" value="1"/>
</dbReference>
<dbReference type="PANTHER" id="PTHR23114:SF17">
    <property type="entry name" value="M7GPPPN-MRNA HYDROLASE"/>
    <property type="match status" value="1"/>
</dbReference>
<dbReference type="Pfam" id="PF00293">
    <property type="entry name" value="NUDIX"/>
    <property type="match status" value="1"/>
</dbReference>
<dbReference type="SUPFAM" id="SSF55811">
    <property type="entry name" value="Nudix"/>
    <property type="match status" value="1"/>
</dbReference>
<dbReference type="PROSITE" id="PS51462">
    <property type="entry name" value="NUDIX"/>
    <property type="match status" value="1"/>
</dbReference>
<dbReference type="PROSITE" id="PS00893">
    <property type="entry name" value="NUDIX_BOX"/>
    <property type="match status" value="1"/>
</dbReference>
<evidence type="ECO:0000255" key="1">
    <source>
        <dbReference type="HAMAP-Rule" id="MF_00298"/>
    </source>
</evidence>
<sequence length="161" mass="18710">MKNSSNKYLDLPYRPGVGMMILNADNQIFVGKRIDTKISAWQMPQGGIVPGETPSIAAMREMLEEIGSNKGYIIAESKCWYSYDVPSFLIPKLWNGNFRGQKQRWFLIRFTGNNKDINIHTSNPEFDQWRWTSLDELLSIIIPFKRKLYQAVVKEFESLIQ</sequence>
<keyword id="KW-0378">Hydrolase</keyword>
<reference key="1">
    <citation type="journal article" date="2004" name="J. Bacteriol.">
        <title>Complete genome sequence of Rickettsia typhi and comparison with sequences of other Rickettsiae.</title>
        <authorList>
            <person name="McLeod M.P."/>
            <person name="Qin X."/>
            <person name="Karpathy S.E."/>
            <person name="Gioia J."/>
            <person name="Highlander S.K."/>
            <person name="Fox G.E."/>
            <person name="McNeill T.Z."/>
            <person name="Jiang H."/>
            <person name="Muzny D."/>
            <person name="Jacob L.S."/>
            <person name="Hawes A.C."/>
            <person name="Sodergren E."/>
            <person name="Gill R."/>
            <person name="Hume J."/>
            <person name="Morgan M."/>
            <person name="Fan G."/>
            <person name="Amin A.G."/>
            <person name="Gibbs R.A."/>
            <person name="Hong C."/>
            <person name="Yu X.-J."/>
            <person name="Walker D.H."/>
            <person name="Weinstock G.M."/>
        </authorList>
    </citation>
    <scope>NUCLEOTIDE SEQUENCE [LARGE SCALE GENOMIC DNA]</scope>
    <source>
        <strain>ATCC VR-144 / Wilmington</strain>
    </source>
</reference>
<comment type="function">
    <text evidence="1">Accelerates the degradation of transcripts by removing pyrophosphate from the 5'-end of triphosphorylated RNA, leading to a more labile monophosphorylated state that can stimulate subsequent ribonuclease cleavage.</text>
</comment>
<comment type="cofactor">
    <cofactor evidence="1">
        <name>a divalent metal cation</name>
        <dbReference type="ChEBI" id="CHEBI:60240"/>
    </cofactor>
</comment>
<comment type="similarity">
    <text evidence="1">Belongs to the Nudix hydrolase family. RppH subfamily.</text>
</comment>
<protein>
    <recommendedName>
        <fullName evidence="1">RNA pyrophosphohydrolase</fullName>
        <ecNumber evidence="1">3.6.1.-</ecNumber>
    </recommendedName>
    <alternativeName>
        <fullName evidence="1">(Di)nucleoside polyphosphate hydrolase</fullName>
    </alternativeName>
</protein>
<organism>
    <name type="scientific">Rickettsia typhi (strain ATCC VR-144 / Wilmington)</name>
    <dbReference type="NCBI Taxonomy" id="257363"/>
    <lineage>
        <taxon>Bacteria</taxon>
        <taxon>Pseudomonadati</taxon>
        <taxon>Pseudomonadota</taxon>
        <taxon>Alphaproteobacteria</taxon>
        <taxon>Rickettsiales</taxon>
        <taxon>Rickettsiaceae</taxon>
        <taxon>Rickettsieae</taxon>
        <taxon>Rickettsia</taxon>
        <taxon>typhus group</taxon>
    </lineage>
</organism>